<evidence type="ECO:0000255" key="1">
    <source>
        <dbReference type="HAMAP-Rule" id="MF_01849"/>
    </source>
</evidence>
<evidence type="ECO:0000255" key="2">
    <source>
        <dbReference type="PROSITE-ProRule" id="PRU01266"/>
    </source>
</evidence>
<dbReference type="EC" id="2.1.1.192" evidence="1"/>
<dbReference type="EMBL" id="CP000932">
    <property type="protein sequence ID" value="ACM63389.1"/>
    <property type="molecule type" value="Genomic_DNA"/>
</dbReference>
<dbReference type="RefSeq" id="WP_012660775.1">
    <property type="nucleotide sequence ID" value="NC_012039.1"/>
</dbReference>
<dbReference type="SMR" id="B9KEA4"/>
<dbReference type="STRING" id="306263.Cla_0021"/>
<dbReference type="KEGG" id="cla:CLA_0021"/>
<dbReference type="PATRIC" id="fig|306263.5.peg.22"/>
<dbReference type="eggNOG" id="COG0820">
    <property type="taxonomic scope" value="Bacteria"/>
</dbReference>
<dbReference type="HOGENOM" id="CLU_029101_2_0_7"/>
<dbReference type="Proteomes" id="UP000007727">
    <property type="component" value="Chromosome"/>
</dbReference>
<dbReference type="GO" id="GO:0005737">
    <property type="term" value="C:cytoplasm"/>
    <property type="evidence" value="ECO:0007669"/>
    <property type="project" value="UniProtKB-SubCell"/>
</dbReference>
<dbReference type="GO" id="GO:0051539">
    <property type="term" value="F:4 iron, 4 sulfur cluster binding"/>
    <property type="evidence" value="ECO:0007669"/>
    <property type="project" value="UniProtKB-UniRule"/>
</dbReference>
<dbReference type="GO" id="GO:0046872">
    <property type="term" value="F:metal ion binding"/>
    <property type="evidence" value="ECO:0007669"/>
    <property type="project" value="UniProtKB-KW"/>
</dbReference>
<dbReference type="GO" id="GO:0070040">
    <property type="term" value="F:rRNA (adenine(2503)-C2-)-methyltransferase activity"/>
    <property type="evidence" value="ECO:0007669"/>
    <property type="project" value="UniProtKB-UniRule"/>
</dbReference>
<dbReference type="GO" id="GO:0019843">
    <property type="term" value="F:rRNA binding"/>
    <property type="evidence" value="ECO:0007669"/>
    <property type="project" value="UniProtKB-UniRule"/>
</dbReference>
<dbReference type="GO" id="GO:0002935">
    <property type="term" value="F:tRNA (adenine(37)-C2)-methyltransferase activity"/>
    <property type="evidence" value="ECO:0007669"/>
    <property type="project" value="UniProtKB-UniRule"/>
</dbReference>
<dbReference type="GO" id="GO:0000049">
    <property type="term" value="F:tRNA binding"/>
    <property type="evidence" value="ECO:0007669"/>
    <property type="project" value="UniProtKB-UniRule"/>
</dbReference>
<dbReference type="GO" id="GO:0070475">
    <property type="term" value="P:rRNA base methylation"/>
    <property type="evidence" value="ECO:0007669"/>
    <property type="project" value="UniProtKB-UniRule"/>
</dbReference>
<dbReference type="GO" id="GO:0030488">
    <property type="term" value="P:tRNA methylation"/>
    <property type="evidence" value="ECO:0007669"/>
    <property type="project" value="UniProtKB-UniRule"/>
</dbReference>
<dbReference type="CDD" id="cd01335">
    <property type="entry name" value="Radical_SAM"/>
    <property type="match status" value="1"/>
</dbReference>
<dbReference type="FunFam" id="3.20.20.70:FF:000014">
    <property type="entry name" value="Probable dual-specificity RNA methyltransferase RlmN"/>
    <property type="match status" value="1"/>
</dbReference>
<dbReference type="Gene3D" id="1.10.150.530">
    <property type="match status" value="1"/>
</dbReference>
<dbReference type="Gene3D" id="3.20.20.70">
    <property type="entry name" value="Aldolase class I"/>
    <property type="match status" value="1"/>
</dbReference>
<dbReference type="HAMAP" id="MF_01849">
    <property type="entry name" value="RNA_methyltr_RlmN"/>
    <property type="match status" value="1"/>
</dbReference>
<dbReference type="InterPro" id="IPR013785">
    <property type="entry name" value="Aldolase_TIM"/>
</dbReference>
<dbReference type="InterPro" id="IPR006638">
    <property type="entry name" value="Elp3/MiaA/NifB-like_rSAM"/>
</dbReference>
<dbReference type="InterPro" id="IPR040072">
    <property type="entry name" value="Methyltransferase_A"/>
</dbReference>
<dbReference type="InterPro" id="IPR048641">
    <property type="entry name" value="RlmN_N"/>
</dbReference>
<dbReference type="InterPro" id="IPR027492">
    <property type="entry name" value="RNA_MTrfase_RlmN"/>
</dbReference>
<dbReference type="InterPro" id="IPR004383">
    <property type="entry name" value="rRNA_lsu_MTrfase_RlmN/Cfr"/>
</dbReference>
<dbReference type="InterPro" id="IPR007197">
    <property type="entry name" value="rSAM"/>
</dbReference>
<dbReference type="NCBIfam" id="TIGR00048">
    <property type="entry name" value="rRNA_mod_RlmN"/>
    <property type="match status" value="1"/>
</dbReference>
<dbReference type="PANTHER" id="PTHR30544">
    <property type="entry name" value="23S RRNA METHYLTRANSFERASE"/>
    <property type="match status" value="1"/>
</dbReference>
<dbReference type="PANTHER" id="PTHR30544:SF5">
    <property type="entry name" value="RADICAL SAM CORE DOMAIN-CONTAINING PROTEIN"/>
    <property type="match status" value="1"/>
</dbReference>
<dbReference type="Pfam" id="PF04055">
    <property type="entry name" value="Radical_SAM"/>
    <property type="match status" value="1"/>
</dbReference>
<dbReference type="Pfam" id="PF21016">
    <property type="entry name" value="RlmN_N"/>
    <property type="match status" value="1"/>
</dbReference>
<dbReference type="PIRSF" id="PIRSF006004">
    <property type="entry name" value="CHP00048"/>
    <property type="match status" value="1"/>
</dbReference>
<dbReference type="SFLD" id="SFLDF00275">
    <property type="entry name" value="adenosine_C2_methyltransferase"/>
    <property type="match status" value="1"/>
</dbReference>
<dbReference type="SFLD" id="SFLDG01062">
    <property type="entry name" value="methyltransferase_(Class_A)"/>
    <property type="match status" value="1"/>
</dbReference>
<dbReference type="SMART" id="SM00729">
    <property type="entry name" value="Elp3"/>
    <property type="match status" value="1"/>
</dbReference>
<dbReference type="SUPFAM" id="SSF102114">
    <property type="entry name" value="Radical SAM enzymes"/>
    <property type="match status" value="1"/>
</dbReference>
<dbReference type="PROSITE" id="PS51918">
    <property type="entry name" value="RADICAL_SAM"/>
    <property type="match status" value="1"/>
</dbReference>
<organism>
    <name type="scientific">Campylobacter lari (strain RM2100 / D67 / ATCC BAA-1060)</name>
    <dbReference type="NCBI Taxonomy" id="306263"/>
    <lineage>
        <taxon>Bacteria</taxon>
        <taxon>Pseudomonadati</taxon>
        <taxon>Campylobacterota</taxon>
        <taxon>Epsilonproteobacteria</taxon>
        <taxon>Campylobacterales</taxon>
        <taxon>Campylobacteraceae</taxon>
        <taxon>Campylobacter</taxon>
    </lineage>
</organism>
<keyword id="KW-0004">4Fe-4S</keyword>
<keyword id="KW-0963">Cytoplasm</keyword>
<keyword id="KW-1015">Disulfide bond</keyword>
<keyword id="KW-0408">Iron</keyword>
<keyword id="KW-0411">Iron-sulfur</keyword>
<keyword id="KW-0479">Metal-binding</keyword>
<keyword id="KW-0489">Methyltransferase</keyword>
<keyword id="KW-1185">Reference proteome</keyword>
<keyword id="KW-0698">rRNA processing</keyword>
<keyword id="KW-0949">S-adenosyl-L-methionine</keyword>
<keyword id="KW-0808">Transferase</keyword>
<keyword id="KW-0819">tRNA processing</keyword>
<gene>
    <name evidence="1" type="primary">rlmN</name>
    <name type="ordered locus">Cla_0021</name>
</gene>
<comment type="function">
    <text evidence="1">Specifically methylates position 2 of adenine 2503 in 23S rRNA and position 2 of adenine 37 in tRNAs. m2A2503 modification seems to play a crucial role in the proofreading step occurring at the peptidyl transferase center and thus would serve to optimize ribosomal fidelity.</text>
</comment>
<comment type="catalytic activity">
    <reaction evidence="1">
        <text>adenosine(2503) in 23S rRNA + 2 reduced [2Fe-2S]-[ferredoxin] + 2 S-adenosyl-L-methionine = 2-methyladenosine(2503) in 23S rRNA + 5'-deoxyadenosine + L-methionine + 2 oxidized [2Fe-2S]-[ferredoxin] + S-adenosyl-L-homocysteine</text>
        <dbReference type="Rhea" id="RHEA:42916"/>
        <dbReference type="Rhea" id="RHEA-COMP:10000"/>
        <dbReference type="Rhea" id="RHEA-COMP:10001"/>
        <dbReference type="Rhea" id="RHEA-COMP:10152"/>
        <dbReference type="Rhea" id="RHEA-COMP:10282"/>
        <dbReference type="ChEBI" id="CHEBI:17319"/>
        <dbReference type="ChEBI" id="CHEBI:33737"/>
        <dbReference type="ChEBI" id="CHEBI:33738"/>
        <dbReference type="ChEBI" id="CHEBI:57844"/>
        <dbReference type="ChEBI" id="CHEBI:57856"/>
        <dbReference type="ChEBI" id="CHEBI:59789"/>
        <dbReference type="ChEBI" id="CHEBI:74411"/>
        <dbReference type="ChEBI" id="CHEBI:74497"/>
        <dbReference type="EC" id="2.1.1.192"/>
    </reaction>
</comment>
<comment type="catalytic activity">
    <reaction evidence="1">
        <text>adenosine(37) in tRNA + 2 reduced [2Fe-2S]-[ferredoxin] + 2 S-adenosyl-L-methionine = 2-methyladenosine(37) in tRNA + 5'-deoxyadenosine + L-methionine + 2 oxidized [2Fe-2S]-[ferredoxin] + S-adenosyl-L-homocysteine</text>
        <dbReference type="Rhea" id="RHEA:43332"/>
        <dbReference type="Rhea" id="RHEA-COMP:10000"/>
        <dbReference type="Rhea" id="RHEA-COMP:10001"/>
        <dbReference type="Rhea" id="RHEA-COMP:10162"/>
        <dbReference type="Rhea" id="RHEA-COMP:10485"/>
        <dbReference type="ChEBI" id="CHEBI:17319"/>
        <dbReference type="ChEBI" id="CHEBI:33737"/>
        <dbReference type="ChEBI" id="CHEBI:33738"/>
        <dbReference type="ChEBI" id="CHEBI:57844"/>
        <dbReference type="ChEBI" id="CHEBI:57856"/>
        <dbReference type="ChEBI" id="CHEBI:59789"/>
        <dbReference type="ChEBI" id="CHEBI:74411"/>
        <dbReference type="ChEBI" id="CHEBI:74497"/>
        <dbReference type="EC" id="2.1.1.192"/>
    </reaction>
</comment>
<comment type="cofactor">
    <cofactor evidence="1">
        <name>[4Fe-4S] cluster</name>
        <dbReference type="ChEBI" id="CHEBI:49883"/>
    </cofactor>
    <text evidence="1">Binds 1 [4Fe-4S] cluster. The cluster is coordinated with 3 cysteines and an exchangeable S-adenosyl-L-methionine.</text>
</comment>
<comment type="subcellular location">
    <subcellularLocation>
        <location evidence="1">Cytoplasm</location>
    </subcellularLocation>
</comment>
<comment type="miscellaneous">
    <text evidence="1">Reaction proceeds by a ping-pong mechanism involving intermediate methylation of a conserved cysteine residue.</text>
</comment>
<comment type="similarity">
    <text evidence="1">Belongs to the radical SAM superfamily. RlmN family.</text>
</comment>
<name>RLMN_CAMLR</name>
<accession>B9KEA4</accession>
<reference key="1">
    <citation type="journal article" date="2008" name="Foodborne Pathog. Dis.">
        <title>The complete genome sequence and analysis of the human pathogen Campylobacter lari.</title>
        <authorList>
            <person name="Miller W.G."/>
            <person name="Wang G."/>
            <person name="Binnewies T.T."/>
            <person name="Parker C.T."/>
        </authorList>
    </citation>
    <scope>NUCLEOTIDE SEQUENCE [LARGE SCALE GENOMIC DNA]</scope>
    <source>
        <strain>RM2100 / D67 / ATCC BAA-1060</strain>
    </source>
</reference>
<feature type="chain" id="PRO_1000188556" description="Dual-specificity RNA methyltransferase RlmN">
    <location>
        <begin position="1"/>
        <end position="356"/>
    </location>
</feature>
<feature type="domain" description="Radical SAM core" evidence="2">
    <location>
        <begin position="108"/>
        <end position="341"/>
    </location>
</feature>
<feature type="active site" description="Proton acceptor" evidence="1">
    <location>
        <position position="89"/>
    </location>
</feature>
<feature type="active site" description="S-methylcysteine intermediate" evidence="1">
    <location>
        <position position="346"/>
    </location>
</feature>
<feature type="binding site" evidence="1">
    <location>
        <position position="122"/>
    </location>
    <ligand>
        <name>[4Fe-4S] cluster</name>
        <dbReference type="ChEBI" id="CHEBI:49883"/>
        <note>4Fe-4S-S-AdoMet</note>
    </ligand>
</feature>
<feature type="binding site" evidence="1">
    <location>
        <position position="126"/>
    </location>
    <ligand>
        <name>[4Fe-4S] cluster</name>
        <dbReference type="ChEBI" id="CHEBI:49883"/>
        <note>4Fe-4S-S-AdoMet</note>
    </ligand>
</feature>
<feature type="binding site" evidence="1">
    <location>
        <position position="129"/>
    </location>
    <ligand>
        <name>[4Fe-4S] cluster</name>
        <dbReference type="ChEBI" id="CHEBI:49883"/>
        <note>4Fe-4S-S-AdoMet</note>
    </ligand>
</feature>
<feature type="binding site" evidence="1">
    <location>
        <begin position="172"/>
        <end position="173"/>
    </location>
    <ligand>
        <name>S-adenosyl-L-methionine</name>
        <dbReference type="ChEBI" id="CHEBI:59789"/>
    </ligand>
</feature>
<feature type="binding site" evidence="1">
    <location>
        <position position="204"/>
    </location>
    <ligand>
        <name>S-adenosyl-L-methionine</name>
        <dbReference type="ChEBI" id="CHEBI:59789"/>
    </ligand>
</feature>
<feature type="binding site" evidence="1">
    <location>
        <begin position="227"/>
        <end position="229"/>
    </location>
    <ligand>
        <name>S-adenosyl-L-methionine</name>
        <dbReference type="ChEBI" id="CHEBI:59789"/>
    </ligand>
</feature>
<feature type="binding site" evidence="1">
    <location>
        <position position="303"/>
    </location>
    <ligand>
        <name>S-adenosyl-L-methionine</name>
        <dbReference type="ChEBI" id="CHEBI:59789"/>
    </ligand>
</feature>
<feature type="disulfide bond" description="(transient)" evidence="1">
    <location>
        <begin position="115"/>
        <end position="346"/>
    </location>
</feature>
<proteinExistence type="inferred from homology"/>
<sequence length="356" mass="40348">MSELKNMLDFTKEELENLVQPKFRAKQIFEWVYKKYADDFLQMSSLPKDFRVYLQKNFHFSPLKCVKDEKSKDGSIKYLFELLDGKKIEAVLLPMKEELVDENGKIIKHARYTICVSSQVGCKSGCSFCLTAKGGLSRNLSAGEIVGQILWIKKHNKIPYERRVNIVYMGMGEPLDNLKNVSKAVKILADNDALAISPRRQTISTSGLAKQIKELGEMNLGVLLAISLHAVNDELRSELMPINKAYNIASIMEAVRNFPIDQRKRVMFEYLLIDGINDKIEHAKELVKLLNGIKAKVNLILFNPHEGSLYNRPSVENAIKFQDYLSAKGVTCTIRESKGLDISAACGQLKERQSKQ</sequence>
<protein>
    <recommendedName>
        <fullName evidence="1">Dual-specificity RNA methyltransferase RlmN</fullName>
        <ecNumber evidence="1">2.1.1.192</ecNumber>
    </recommendedName>
    <alternativeName>
        <fullName evidence="1">23S rRNA (adenine(2503)-C(2))-methyltransferase</fullName>
    </alternativeName>
    <alternativeName>
        <fullName evidence="1">23S rRNA m2A2503 methyltransferase</fullName>
    </alternativeName>
    <alternativeName>
        <fullName evidence="1">Ribosomal RNA large subunit methyltransferase N</fullName>
    </alternativeName>
    <alternativeName>
        <fullName evidence="1">tRNA (adenine(37)-C(2))-methyltransferase</fullName>
    </alternativeName>
    <alternativeName>
        <fullName evidence="1">tRNA m2A37 methyltransferase</fullName>
    </alternativeName>
</protein>